<feature type="peptide" id="PRO_0000043458" description="Callatostatin-5">
    <location>
        <begin position="1"/>
        <end position="8"/>
    </location>
</feature>
<feature type="modified residue" description="Hydroxyproline; partial" evidence="1">
    <location>
        <position position="3"/>
    </location>
</feature>
<feature type="modified residue" description="Methionine amide" evidence="2">
    <location>
        <position position="8"/>
    </location>
</feature>
<evidence type="ECO:0000269" key="1">
    <source>
    </source>
</evidence>
<evidence type="ECO:0000269" key="2">
    <source>
    </source>
</evidence>
<evidence type="ECO:0000305" key="3"/>
<organism>
    <name type="scientific">Calliphora vomitoria</name>
    <name type="common">Blue bottle fly</name>
    <name type="synonym">Musca vomitoria</name>
    <dbReference type="NCBI Taxonomy" id="27454"/>
    <lineage>
        <taxon>Eukaryota</taxon>
        <taxon>Metazoa</taxon>
        <taxon>Ecdysozoa</taxon>
        <taxon>Arthropoda</taxon>
        <taxon>Hexapoda</taxon>
        <taxon>Insecta</taxon>
        <taxon>Pterygota</taxon>
        <taxon>Neoptera</taxon>
        <taxon>Endopterygota</taxon>
        <taxon>Diptera</taxon>
        <taxon>Brachycera</taxon>
        <taxon>Muscomorpha</taxon>
        <taxon>Oestroidea</taxon>
        <taxon>Calliphoridae</taxon>
        <taxon>Calliphorinae</taxon>
        <taxon>Calliphora</taxon>
    </lineage>
</organism>
<reference key="1">
    <citation type="journal article" date="1993" name="Proc. Natl. Acad. Sci. U.S.A.">
        <title>Callatostatins: neuropeptides from the blowfly Calliphora vomitoria with sequence homology to cockroach allatostatins.</title>
        <authorList>
            <person name="Duve H."/>
            <person name="Johnsen A.H."/>
            <person name="Scott A.G."/>
            <person name="Yu C.G."/>
            <person name="Yagi K.J."/>
            <person name="Tobe S.S."/>
            <person name="Thorpe A."/>
        </authorList>
    </citation>
    <scope>PROTEIN SEQUENCE</scope>
    <scope>AMIDATION AT MET-8</scope>
</reference>
<reference key="2">
    <citation type="journal article" date="1994" name="J. Biol. Chem.">
        <title>[Hyp3]Met-callatostatin. Identification and biological properties of a novel neuropeptide from the blowfly Calliphora vomitoria.</title>
        <authorList>
            <person name="Duve H."/>
            <person name="Johnsen A.H."/>
            <person name="Scott A.G."/>
            <person name="East P."/>
            <person name="Thorpe A."/>
        </authorList>
    </citation>
    <scope>CHARACTERIZATION</scope>
    <scope>HYDROXYLATION AT PRO-3</scope>
    <source>
        <tissue>Head</tissue>
    </source>
</reference>
<name>ALL5_CALVO</name>
<sequence>GPPYDFGM</sequence>
<comment type="function">
    <text>May act as a neurotransmitter or neuromodulator and play a role in the integration of information within the brain. May be involved in the control of visceral muscles due to its ability to behave as potent inhibitors of peristaltic movements. May also fulfill a neurohormonal role on muscles of the gut and heart.</text>
</comment>
<comment type="subcellular location">
    <subcellularLocation>
        <location>Secreted</location>
    </subcellularLocation>
</comment>
<comment type="tissue specificity">
    <text>Neurons within brain and abdominal ganglion.</text>
</comment>
<comment type="similarity">
    <text evidence="3">Belongs to the allatostatin family.</text>
</comment>
<protein>
    <recommendedName>
        <fullName>Callatostatin-5</fullName>
    </recommendedName>
    <alternativeName>
        <fullName>Met-callatostatin-1</fullName>
    </alternativeName>
    <alternativeName>
        <fullName>[Hyp3]Met-callatostatin</fullName>
    </alternativeName>
</protein>
<proteinExistence type="evidence at protein level"/>
<keyword id="KW-0027">Amidation</keyword>
<keyword id="KW-0903">Direct protein sequencing</keyword>
<keyword id="KW-0379">Hydroxylation</keyword>
<keyword id="KW-0527">Neuropeptide</keyword>
<keyword id="KW-0964">Secreted</keyword>
<dbReference type="PIR" id="E47393">
    <property type="entry name" value="E47393"/>
</dbReference>
<dbReference type="GO" id="GO:0005576">
    <property type="term" value="C:extracellular region"/>
    <property type="evidence" value="ECO:0007669"/>
    <property type="project" value="UniProtKB-SubCell"/>
</dbReference>
<dbReference type="GO" id="GO:0007218">
    <property type="term" value="P:neuropeptide signaling pathway"/>
    <property type="evidence" value="ECO:0007669"/>
    <property type="project" value="UniProtKB-KW"/>
</dbReference>
<accession>P41841</accession>